<reference key="1">
    <citation type="journal article" date="2005" name="Proc. Natl. Acad. Sci. U.S.A.">
        <title>The genome of the heartwater agent Ehrlichia ruminantium contains multiple tandem repeats of actively variable copy number.</title>
        <authorList>
            <person name="Collins N.E."/>
            <person name="Liebenberg J."/>
            <person name="de Villiers E.P."/>
            <person name="Brayton K.A."/>
            <person name="Louw E."/>
            <person name="Pretorius A."/>
            <person name="Faber F.E."/>
            <person name="van Heerden H."/>
            <person name="Josemans A."/>
            <person name="van Kleef M."/>
            <person name="Steyn H.C."/>
            <person name="van Strijp M.F."/>
            <person name="Zweygarth E."/>
            <person name="Jongejan F."/>
            <person name="Maillard J.C."/>
            <person name="Berthier D."/>
            <person name="Botha M."/>
            <person name="Joubert F."/>
            <person name="Corton C.H."/>
            <person name="Thomson N.R."/>
            <person name="Allsopp M.T."/>
            <person name="Allsopp B.A."/>
        </authorList>
    </citation>
    <scope>NUCLEOTIDE SEQUENCE [LARGE SCALE GENOMIC DNA]</scope>
    <source>
        <strain>Welgevonden</strain>
    </source>
</reference>
<reference key="2">
    <citation type="journal article" date="2006" name="J. Bacteriol.">
        <title>Comparative genomic analysis of three strains of Ehrlichia ruminantium reveals an active process of genome size plasticity.</title>
        <authorList>
            <person name="Frutos R."/>
            <person name="Viari A."/>
            <person name="Ferraz C."/>
            <person name="Morgat A."/>
            <person name="Eychenie S."/>
            <person name="Kandassamy Y."/>
            <person name="Chantal I."/>
            <person name="Bensaid A."/>
            <person name="Coissac E."/>
            <person name="Vachiery N."/>
            <person name="Demaille J."/>
            <person name="Martinez D."/>
        </authorList>
    </citation>
    <scope>NUCLEOTIDE SEQUENCE [LARGE SCALE GENOMIC DNA]</scope>
    <source>
        <strain>Welgevonden</strain>
    </source>
</reference>
<comment type="function">
    <text evidence="1">Hydrolyzes ribosome-free peptidyl-tRNAs (with 1 or more amino acids incorporated), which drop off the ribosome during protein synthesis, or as a result of ribosome stalling.</text>
</comment>
<comment type="function">
    <text evidence="1">Catalyzes the release of premature peptidyl moieties from peptidyl-tRNA molecules trapped in stalled 50S ribosomal subunits, and thus maintains levels of free tRNAs and 50S ribosomes.</text>
</comment>
<comment type="catalytic activity">
    <reaction evidence="1">
        <text>an N-acyl-L-alpha-aminoacyl-tRNA + H2O = an N-acyl-L-amino acid + a tRNA + H(+)</text>
        <dbReference type="Rhea" id="RHEA:54448"/>
        <dbReference type="Rhea" id="RHEA-COMP:10123"/>
        <dbReference type="Rhea" id="RHEA-COMP:13883"/>
        <dbReference type="ChEBI" id="CHEBI:15377"/>
        <dbReference type="ChEBI" id="CHEBI:15378"/>
        <dbReference type="ChEBI" id="CHEBI:59874"/>
        <dbReference type="ChEBI" id="CHEBI:78442"/>
        <dbReference type="ChEBI" id="CHEBI:138191"/>
        <dbReference type="EC" id="3.1.1.29"/>
    </reaction>
</comment>
<comment type="subunit">
    <text evidence="1">Monomer.</text>
</comment>
<comment type="subcellular location">
    <subcellularLocation>
        <location evidence="1">Cytoplasm</location>
    </subcellularLocation>
</comment>
<comment type="similarity">
    <text evidence="1">Belongs to the PTH family.</text>
</comment>
<comment type="sequence caution" evidence="2">
    <conflict type="erroneous initiation">
        <sequence resource="EMBL-CDS" id="CAI26582"/>
    </conflict>
    <text>Extended N-terminus.</text>
</comment>
<feature type="chain" id="PRO_0000187737" description="Peptidyl-tRNA hydrolase">
    <location>
        <begin position="1"/>
        <end position="193"/>
    </location>
</feature>
<feature type="active site" description="Proton acceptor" evidence="1">
    <location>
        <position position="20"/>
    </location>
</feature>
<feature type="binding site" evidence="1">
    <location>
        <position position="15"/>
    </location>
    <ligand>
        <name>tRNA</name>
        <dbReference type="ChEBI" id="CHEBI:17843"/>
    </ligand>
</feature>
<feature type="binding site" evidence="1">
    <location>
        <position position="65"/>
    </location>
    <ligand>
        <name>tRNA</name>
        <dbReference type="ChEBI" id="CHEBI:17843"/>
    </ligand>
</feature>
<feature type="binding site" evidence="1">
    <location>
        <position position="67"/>
    </location>
    <ligand>
        <name>tRNA</name>
        <dbReference type="ChEBI" id="CHEBI:17843"/>
    </ligand>
</feature>
<feature type="binding site" evidence="1">
    <location>
        <position position="113"/>
    </location>
    <ligand>
        <name>tRNA</name>
        <dbReference type="ChEBI" id="CHEBI:17843"/>
    </ligand>
</feature>
<feature type="site" description="Discriminates between blocked and unblocked aminoacyl-tRNA" evidence="1">
    <location>
        <position position="10"/>
    </location>
</feature>
<feature type="site" description="Stabilizes the basic form of H active site to accept a proton" evidence="1">
    <location>
        <position position="92"/>
    </location>
</feature>
<keyword id="KW-0963">Cytoplasm</keyword>
<keyword id="KW-0378">Hydrolase</keyword>
<keyword id="KW-0694">RNA-binding</keyword>
<keyword id="KW-0820">tRNA-binding</keyword>
<sequence length="193" mass="21839">MLHLLVGLGNPGKEYELTRHNVGFMIIDAIMHHFLFPDFKKKHNALISSGSIRSHKVILAKPYTFMNNSGTPISSIVKLYKIPLDNIIVFHDETDIDFCTIRIKKGGGNAGHNGLKSIDTLLGRDYWRIRFGIGHPSNGYDLSYHVLSQFNNLNAVNNTISNIIEHISLLFENDKSIFKNKVKDLIKYTDISS</sequence>
<dbReference type="EC" id="3.1.1.29" evidence="1"/>
<dbReference type="EMBL" id="CR767821">
    <property type="protein sequence ID" value="CAH57806.1"/>
    <property type="molecule type" value="Genomic_DNA"/>
</dbReference>
<dbReference type="EMBL" id="CR925678">
    <property type="protein sequence ID" value="CAI26582.1"/>
    <property type="status" value="ALT_INIT"/>
    <property type="molecule type" value="Genomic_DNA"/>
</dbReference>
<dbReference type="RefSeq" id="WP_011154775.1">
    <property type="nucleotide sequence ID" value="NC_005295.2"/>
</dbReference>
<dbReference type="SMR" id="Q5HC85"/>
<dbReference type="GeneID" id="33057803"/>
<dbReference type="KEGG" id="eru:Erum0910"/>
<dbReference type="KEGG" id="erw:ERWE_CDS_00880"/>
<dbReference type="eggNOG" id="COG0193">
    <property type="taxonomic scope" value="Bacteria"/>
</dbReference>
<dbReference type="HOGENOM" id="CLU_062456_1_0_5"/>
<dbReference type="Proteomes" id="UP000001021">
    <property type="component" value="Chromosome"/>
</dbReference>
<dbReference type="GO" id="GO:0005737">
    <property type="term" value="C:cytoplasm"/>
    <property type="evidence" value="ECO:0007669"/>
    <property type="project" value="UniProtKB-SubCell"/>
</dbReference>
<dbReference type="GO" id="GO:0004045">
    <property type="term" value="F:peptidyl-tRNA hydrolase activity"/>
    <property type="evidence" value="ECO:0007669"/>
    <property type="project" value="UniProtKB-UniRule"/>
</dbReference>
<dbReference type="GO" id="GO:0000049">
    <property type="term" value="F:tRNA binding"/>
    <property type="evidence" value="ECO:0007669"/>
    <property type="project" value="UniProtKB-UniRule"/>
</dbReference>
<dbReference type="GO" id="GO:0006515">
    <property type="term" value="P:protein quality control for misfolded or incompletely synthesized proteins"/>
    <property type="evidence" value="ECO:0007669"/>
    <property type="project" value="UniProtKB-UniRule"/>
</dbReference>
<dbReference type="GO" id="GO:0072344">
    <property type="term" value="P:rescue of stalled ribosome"/>
    <property type="evidence" value="ECO:0007669"/>
    <property type="project" value="UniProtKB-UniRule"/>
</dbReference>
<dbReference type="CDD" id="cd00462">
    <property type="entry name" value="PTH"/>
    <property type="match status" value="1"/>
</dbReference>
<dbReference type="FunFam" id="3.40.50.1470:FF:000001">
    <property type="entry name" value="Peptidyl-tRNA hydrolase"/>
    <property type="match status" value="1"/>
</dbReference>
<dbReference type="Gene3D" id="3.40.50.1470">
    <property type="entry name" value="Peptidyl-tRNA hydrolase"/>
    <property type="match status" value="1"/>
</dbReference>
<dbReference type="HAMAP" id="MF_00083">
    <property type="entry name" value="Pept_tRNA_hydro_bact"/>
    <property type="match status" value="1"/>
</dbReference>
<dbReference type="InterPro" id="IPR001328">
    <property type="entry name" value="Pept_tRNA_hydro"/>
</dbReference>
<dbReference type="InterPro" id="IPR018171">
    <property type="entry name" value="Pept_tRNA_hydro_CS"/>
</dbReference>
<dbReference type="InterPro" id="IPR036416">
    <property type="entry name" value="Pept_tRNA_hydro_sf"/>
</dbReference>
<dbReference type="NCBIfam" id="TIGR00447">
    <property type="entry name" value="pth"/>
    <property type="match status" value="1"/>
</dbReference>
<dbReference type="PANTHER" id="PTHR17224">
    <property type="entry name" value="PEPTIDYL-TRNA HYDROLASE"/>
    <property type="match status" value="1"/>
</dbReference>
<dbReference type="PANTHER" id="PTHR17224:SF1">
    <property type="entry name" value="PEPTIDYL-TRNA HYDROLASE"/>
    <property type="match status" value="1"/>
</dbReference>
<dbReference type="Pfam" id="PF01195">
    <property type="entry name" value="Pept_tRNA_hydro"/>
    <property type="match status" value="1"/>
</dbReference>
<dbReference type="SUPFAM" id="SSF53178">
    <property type="entry name" value="Peptidyl-tRNA hydrolase-like"/>
    <property type="match status" value="1"/>
</dbReference>
<dbReference type="PROSITE" id="PS01195">
    <property type="entry name" value="PEPT_TRNA_HYDROL_1"/>
    <property type="match status" value="1"/>
</dbReference>
<dbReference type="PROSITE" id="PS01196">
    <property type="entry name" value="PEPT_TRNA_HYDROL_2"/>
    <property type="match status" value="1"/>
</dbReference>
<evidence type="ECO:0000255" key="1">
    <source>
        <dbReference type="HAMAP-Rule" id="MF_00083"/>
    </source>
</evidence>
<evidence type="ECO:0000305" key="2"/>
<name>PTH_EHRRW</name>
<organism>
    <name type="scientific">Ehrlichia ruminantium (strain Welgevonden)</name>
    <dbReference type="NCBI Taxonomy" id="254945"/>
    <lineage>
        <taxon>Bacteria</taxon>
        <taxon>Pseudomonadati</taxon>
        <taxon>Pseudomonadota</taxon>
        <taxon>Alphaproteobacteria</taxon>
        <taxon>Rickettsiales</taxon>
        <taxon>Anaplasmataceae</taxon>
        <taxon>Ehrlichia</taxon>
    </lineage>
</organism>
<accession>Q5HC85</accession>
<accession>Q5FCM1</accession>
<proteinExistence type="inferred from homology"/>
<protein>
    <recommendedName>
        <fullName evidence="1">Peptidyl-tRNA hydrolase</fullName>
        <shortName evidence="1">Pth</shortName>
        <ecNumber evidence="1">3.1.1.29</ecNumber>
    </recommendedName>
</protein>
<gene>
    <name evidence="1" type="primary">pth</name>
    <name type="ordered locus">Erum0910</name>
    <name type="ordered locus">ERWE_CDS_00880</name>
</gene>